<evidence type="ECO:0000255" key="1">
    <source>
        <dbReference type="HAMAP-Rule" id="MF_00712"/>
    </source>
</evidence>
<gene>
    <name evidence="1" type="primary">gcvPA</name>
    <name type="ordered locus">ABC2494</name>
</gene>
<comment type="function">
    <text evidence="1">The glycine cleavage system catalyzes the degradation of glycine. The P protein binds the alpha-amino group of glycine through its pyridoxal phosphate cofactor; CO(2) is released and the remaining methylamine moiety is then transferred to the lipoamide cofactor of the H protein.</text>
</comment>
<comment type="catalytic activity">
    <reaction evidence="1">
        <text>N(6)-[(R)-lipoyl]-L-lysyl-[glycine-cleavage complex H protein] + glycine + H(+) = N(6)-[(R)-S(8)-aminomethyldihydrolipoyl]-L-lysyl-[glycine-cleavage complex H protein] + CO2</text>
        <dbReference type="Rhea" id="RHEA:24304"/>
        <dbReference type="Rhea" id="RHEA-COMP:10494"/>
        <dbReference type="Rhea" id="RHEA-COMP:10495"/>
        <dbReference type="ChEBI" id="CHEBI:15378"/>
        <dbReference type="ChEBI" id="CHEBI:16526"/>
        <dbReference type="ChEBI" id="CHEBI:57305"/>
        <dbReference type="ChEBI" id="CHEBI:83099"/>
        <dbReference type="ChEBI" id="CHEBI:83143"/>
        <dbReference type="EC" id="1.4.4.2"/>
    </reaction>
</comment>
<comment type="subunit">
    <text evidence="1">The glycine cleavage system is composed of four proteins: P, T, L and H. In this organism, the P 'protein' is a heterodimer of two subunits.</text>
</comment>
<comment type="similarity">
    <text evidence="1">Belongs to the GcvP family. N-terminal subunit subfamily.</text>
</comment>
<name>GCSPA_SHOC1</name>
<accession>Q5WF31</accession>
<organism>
    <name type="scientific">Shouchella clausii (strain KSM-K16)</name>
    <name type="common">Alkalihalobacillus clausii</name>
    <dbReference type="NCBI Taxonomy" id="66692"/>
    <lineage>
        <taxon>Bacteria</taxon>
        <taxon>Bacillati</taxon>
        <taxon>Bacillota</taxon>
        <taxon>Bacilli</taxon>
        <taxon>Bacillales</taxon>
        <taxon>Bacillaceae</taxon>
        <taxon>Shouchella</taxon>
    </lineage>
</organism>
<keyword id="KW-0560">Oxidoreductase</keyword>
<keyword id="KW-1185">Reference proteome</keyword>
<protein>
    <recommendedName>
        <fullName evidence="1">Probable glycine dehydrogenase (decarboxylating) subunit 1</fullName>
        <ecNumber evidence="1">1.4.4.2</ecNumber>
    </recommendedName>
    <alternativeName>
        <fullName evidence="1">Glycine cleavage system P-protein subunit 1</fullName>
    </alternativeName>
    <alternativeName>
        <fullName evidence="1">Glycine decarboxylase subunit 1</fullName>
    </alternativeName>
    <alternativeName>
        <fullName evidence="1">Glycine dehydrogenase (aminomethyl-transferring) subunit 1</fullName>
    </alternativeName>
</protein>
<feature type="chain" id="PRO_0000166960" description="Probable glycine dehydrogenase (decarboxylating) subunit 1">
    <location>
        <begin position="1"/>
        <end position="448"/>
    </location>
</feature>
<dbReference type="EC" id="1.4.4.2" evidence="1"/>
<dbReference type="EMBL" id="AP006627">
    <property type="protein sequence ID" value="BAD65029.1"/>
    <property type="molecule type" value="Genomic_DNA"/>
</dbReference>
<dbReference type="RefSeq" id="WP_011247337.1">
    <property type="nucleotide sequence ID" value="NC_006582.1"/>
</dbReference>
<dbReference type="SMR" id="Q5WF31"/>
<dbReference type="STRING" id="66692.ABC2494"/>
<dbReference type="KEGG" id="bcl:ABC2494"/>
<dbReference type="eggNOG" id="COG0403">
    <property type="taxonomic scope" value="Bacteria"/>
</dbReference>
<dbReference type="HOGENOM" id="CLU_004620_0_2_9"/>
<dbReference type="Proteomes" id="UP000001168">
    <property type="component" value="Chromosome"/>
</dbReference>
<dbReference type="GO" id="GO:0004375">
    <property type="term" value="F:glycine dehydrogenase (decarboxylating) activity"/>
    <property type="evidence" value="ECO:0007669"/>
    <property type="project" value="UniProtKB-EC"/>
</dbReference>
<dbReference type="GO" id="GO:0019464">
    <property type="term" value="P:glycine decarboxylation via glycine cleavage system"/>
    <property type="evidence" value="ECO:0007669"/>
    <property type="project" value="UniProtKB-UniRule"/>
</dbReference>
<dbReference type="GO" id="GO:0009116">
    <property type="term" value="P:nucleoside metabolic process"/>
    <property type="evidence" value="ECO:0007669"/>
    <property type="project" value="InterPro"/>
</dbReference>
<dbReference type="CDD" id="cd00613">
    <property type="entry name" value="GDC-P"/>
    <property type="match status" value="1"/>
</dbReference>
<dbReference type="FunFam" id="3.40.640.10:FF:000113">
    <property type="entry name" value="Probable glycine dehydrogenase (decarboxylating) subunit 1"/>
    <property type="match status" value="1"/>
</dbReference>
<dbReference type="Gene3D" id="3.90.1150.10">
    <property type="entry name" value="Aspartate Aminotransferase, domain 1"/>
    <property type="match status" value="1"/>
</dbReference>
<dbReference type="Gene3D" id="3.40.640.10">
    <property type="entry name" value="Type I PLP-dependent aspartate aminotransferase-like (Major domain)"/>
    <property type="match status" value="1"/>
</dbReference>
<dbReference type="HAMAP" id="MF_00712">
    <property type="entry name" value="GcvPA"/>
    <property type="match status" value="1"/>
</dbReference>
<dbReference type="InterPro" id="IPR023010">
    <property type="entry name" value="GcvPA"/>
</dbReference>
<dbReference type="InterPro" id="IPR049315">
    <property type="entry name" value="GDC-P_N"/>
</dbReference>
<dbReference type="InterPro" id="IPR020581">
    <property type="entry name" value="GDC_P"/>
</dbReference>
<dbReference type="InterPro" id="IPR015424">
    <property type="entry name" value="PyrdxlP-dep_Trfase"/>
</dbReference>
<dbReference type="InterPro" id="IPR015421">
    <property type="entry name" value="PyrdxlP-dep_Trfase_major"/>
</dbReference>
<dbReference type="InterPro" id="IPR015422">
    <property type="entry name" value="PyrdxlP-dep_Trfase_small"/>
</dbReference>
<dbReference type="NCBIfam" id="NF001696">
    <property type="entry name" value="PRK00451.1"/>
    <property type="match status" value="1"/>
</dbReference>
<dbReference type="PANTHER" id="PTHR42806">
    <property type="entry name" value="GLYCINE CLEAVAGE SYSTEM P-PROTEIN"/>
    <property type="match status" value="1"/>
</dbReference>
<dbReference type="PANTHER" id="PTHR42806:SF1">
    <property type="entry name" value="GLYCINE DEHYDROGENASE (DECARBOXYLATING)"/>
    <property type="match status" value="1"/>
</dbReference>
<dbReference type="Pfam" id="PF02347">
    <property type="entry name" value="GDC-P"/>
    <property type="match status" value="1"/>
</dbReference>
<dbReference type="PIRSF" id="PIRSF006815">
    <property type="entry name" value="GcvPA"/>
    <property type="match status" value="1"/>
</dbReference>
<dbReference type="SUPFAM" id="SSF53383">
    <property type="entry name" value="PLP-dependent transferases"/>
    <property type="match status" value="1"/>
</dbReference>
<reference key="1">
    <citation type="submission" date="2003-10" db="EMBL/GenBank/DDBJ databases">
        <title>The complete genome sequence of the alkaliphilic Bacillus clausii KSM-K16.</title>
        <authorList>
            <person name="Takaki Y."/>
            <person name="Kageyama Y."/>
            <person name="Shimamura S."/>
            <person name="Suzuki H."/>
            <person name="Nishi S."/>
            <person name="Hatada Y."/>
            <person name="Kawai S."/>
            <person name="Ito S."/>
            <person name="Horikoshi K."/>
        </authorList>
    </citation>
    <scope>NUCLEOTIDE SEQUENCE [LARGE SCALE GENOMIC DNA]</scope>
    <source>
        <strain>KSM-K16</strain>
    </source>
</reference>
<sequence length="448" mass="48989">MNTHRYLPMTEEDKKEMLATIGVDSIEALFADIPESTRFKSQLAIEAALKEPELIAHFQKLADENQSIKTYTSFLGAGVYEHYIPSIVDHVISRSEFYTAYTPYQPEISQGELQAIFEFQTMICELTGMDIANSSMYDGPTALAEAAMLSCGHTKKKTILVSKAVHPEARAVLKTNAYGQRLNVIEIDANANVTDIESLKAAYNDEVACVIVQHPNFYGSLEPLAEIEEIVHQGKAQFVVSSNPLALGVLKPPGDFGADIVVGDAQPFGIPVQFGGPHCGYFATTKKLMRKIPGRLVGQTVDEEGRRGFVLTLQAREQHIRREKATSNICSNQALNALAASVAMTALGKQGVKEMAKQNVQKSAYLKKQLSLAGIDVVGDGPTFNEFVINCGQPVKDVNRQLLEKGMIGGFDLGSVEPERNGQMLVCVTELRTKEELDLFANEMGALV</sequence>
<proteinExistence type="inferred from homology"/>